<accession>Q37384</accession>
<dbReference type="EC" id="7.1.1.2"/>
<dbReference type="EMBL" id="U12386">
    <property type="protein sequence ID" value="AAD11854.1"/>
    <property type="molecule type" value="Genomic_DNA"/>
</dbReference>
<dbReference type="PIR" id="S53862">
    <property type="entry name" value="S53862"/>
</dbReference>
<dbReference type="RefSeq" id="NP_042561.1">
    <property type="nucleotide sequence ID" value="NC_001637.1"/>
</dbReference>
<dbReference type="SMR" id="Q37384"/>
<dbReference type="GeneID" id="1734056"/>
<dbReference type="GO" id="GO:0005739">
    <property type="term" value="C:mitochondrion"/>
    <property type="evidence" value="ECO:0007669"/>
    <property type="project" value="UniProtKB-SubCell"/>
</dbReference>
<dbReference type="GO" id="GO:0051287">
    <property type="term" value="F:NAD binding"/>
    <property type="evidence" value="ECO:0007669"/>
    <property type="project" value="InterPro"/>
</dbReference>
<dbReference type="GO" id="GO:0008137">
    <property type="term" value="F:NADH dehydrogenase (ubiquinone) activity"/>
    <property type="evidence" value="ECO:0007669"/>
    <property type="project" value="UniProtKB-EC"/>
</dbReference>
<dbReference type="GO" id="GO:0048038">
    <property type="term" value="F:quinone binding"/>
    <property type="evidence" value="ECO:0007669"/>
    <property type="project" value="InterPro"/>
</dbReference>
<dbReference type="GO" id="GO:0006120">
    <property type="term" value="P:mitochondrial electron transport, NADH to ubiquinone"/>
    <property type="evidence" value="ECO:0007669"/>
    <property type="project" value="TreeGrafter"/>
</dbReference>
<dbReference type="FunFam" id="1.10.645.10:FF:000005">
    <property type="entry name" value="NADH-quinone oxidoreductase subunit D"/>
    <property type="match status" value="1"/>
</dbReference>
<dbReference type="Gene3D" id="1.10.645.10">
    <property type="entry name" value="Cytochrome-c3 Hydrogenase, chain B"/>
    <property type="match status" value="1"/>
</dbReference>
<dbReference type="HAMAP" id="MF_01358">
    <property type="entry name" value="NDH1_NuoD"/>
    <property type="match status" value="1"/>
</dbReference>
<dbReference type="InterPro" id="IPR001135">
    <property type="entry name" value="NADH_Q_OxRdtase_suD"/>
</dbReference>
<dbReference type="InterPro" id="IPR014029">
    <property type="entry name" value="NADH_UbQ_OxRdtase_49kDa_CS"/>
</dbReference>
<dbReference type="InterPro" id="IPR022885">
    <property type="entry name" value="NDH1_su_D/H"/>
</dbReference>
<dbReference type="InterPro" id="IPR029014">
    <property type="entry name" value="NiFe-Hase_large"/>
</dbReference>
<dbReference type="NCBIfam" id="TIGR01962">
    <property type="entry name" value="NuoD"/>
    <property type="match status" value="1"/>
</dbReference>
<dbReference type="NCBIfam" id="NF004739">
    <property type="entry name" value="PRK06075.1"/>
    <property type="match status" value="1"/>
</dbReference>
<dbReference type="PANTHER" id="PTHR11993:SF10">
    <property type="entry name" value="NADH DEHYDROGENASE [UBIQUINONE] IRON-SULFUR PROTEIN 2, MITOCHONDRIAL"/>
    <property type="match status" value="1"/>
</dbReference>
<dbReference type="PANTHER" id="PTHR11993">
    <property type="entry name" value="NADH-UBIQUINONE OXIDOREDUCTASE 49 KDA SUBUNIT"/>
    <property type="match status" value="1"/>
</dbReference>
<dbReference type="Pfam" id="PF00346">
    <property type="entry name" value="Complex1_49kDa"/>
    <property type="match status" value="1"/>
</dbReference>
<dbReference type="SUPFAM" id="SSF56762">
    <property type="entry name" value="HydB/Nqo4-like"/>
    <property type="match status" value="1"/>
</dbReference>
<dbReference type="PROSITE" id="PS00535">
    <property type="entry name" value="COMPLEX1_49K"/>
    <property type="match status" value="1"/>
</dbReference>
<organism>
    <name type="scientific">Acanthamoeba castellanii</name>
    <name type="common">Amoeba</name>
    <dbReference type="NCBI Taxonomy" id="5755"/>
    <lineage>
        <taxon>Eukaryota</taxon>
        <taxon>Amoebozoa</taxon>
        <taxon>Discosea</taxon>
        <taxon>Longamoebia</taxon>
        <taxon>Centramoebida</taxon>
        <taxon>Acanthamoebidae</taxon>
        <taxon>Acanthamoeba</taxon>
    </lineage>
</organism>
<sequence length="401" mass="46096">MRKNQISPYIKTSKIKNFTMNFGPQHPAAHGVLRLILELDGELVRKADPHIGLLHRGTEKLIEYKTYIQALPYFDRLDYVSMMSQEHAYSLAIEKLLNCNVPIRAQYIRVIYSELTRILNHILAVTTHAMDVGALTPFLWLFEEREKLMEFYERVSGARMHAAYIRPGGVAQDFPLGLWNDIMQFVEQFFWRLVEVEELLNGNRIWKQRLVDVGIVTAEEALSHGFSGVMLRGSGIAWDLRKNNPYEVYNKLNFNIPIGKNGDCYDRYLIRVYEMYESLNIIKQCLTAMPAGLIKVNDKKITPPERTDMKYSMESLIHHFKLYSEGFNVPENETYACVEAPKGEFGVYVVSDGSNKPYRCKIKAPGFLHLQSLNSMSKGHMIADVVTIIGTQDIVFGEIDR</sequence>
<geneLocation type="mitochondrion"/>
<name>NDUS2_ACACA</name>
<evidence type="ECO:0000250" key="1"/>
<evidence type="ECO:0000305" key="2"/>
<comment type="function">
    <text evidence="1">Core subunit of the mitochondrial membrane respiratory chain NADH dehydrogenase (Complex I) that is believed to belong to the minimal assembly required for catalysis. Complex I functions in the transfer of electrons from NADH to the respiratory chain. The immediate electron acceptor for the enzyme is believed to be ubiquinone (By similarity). Component of the iron-sulfur (IP) fragment of the enzyme.</text>
</comment>
<comment type="catalytic activity">
    <reaction>
        <text>a ubiquinone + NADH + 5 H(+)(in) = a ubiquinol + NAD(+) + 4 H(+)(out)</text>
        <dbReference type="Rhea" id="RHEA:29091"/>
        <dbReference type="Rhea" id="RHEA-COMP:9565"/>
        <dbReference type="Rhea" id="RHEA-COMP:9566"/>
        <dbReference type="ChEBI" id="CHEBI:15378"/>
        <dbReference type="ChEBI" id="CHEBI:16389"/>
        <dbReference type="ChEBI" id="CHEBI:17976"/>
        <dbReference type="ChEBI" id="CHEBI:57540"/>
        <dbReference type="ChEBI" id="CHEBI:57945"/>
        <dbReference type="EC" id="7.1.1.2"/>
    </reaction>
</comment>
<comment type="subcellular location">
    <subcellularLocation>
        <location>Mitochondrion</location>
    </subcellularLocation>
</comment>
<comment type="similarity">
    <text evidence="2">Belongs to the complex I 49 kDa subunit family.</text>
</comment>
<proteinExistence type="inferred from homology"/>
<keyword id="KW-0249">Electron transport</keyword>
<keyword id="KW-0496">Mitochondrion</keyword>
<keyword id="KW-0520">NAD</keyword>
<keyword id="KW-0560">Oxidoreductase</keyword>
<keyword id="KW-0679">Respiratory chain</keyword>
<keyword id="KW-1278">Translocase</keyword>
<keyword id="KW-0813">Transport</keyword>
<keyword id="KW-0830">Ubiquinone</keyword>
<reference key="1">
    <citation type="journal article" date="1995" name="J. Mol. Biol.">
        <title>The mitochondrial DNA of the amoeboid protozoon, Acanthamoeba castellanii: complete sequence, gene content and genome organization.</title>
        <authorList>
            <person name="Burger G."/>
            <person name="Plante I."/>
            <person name="Lonergan K.M."/>
            <person name="Gray M.W."/>
        </authorList>
    </citation>
    <scope>NUCLEOTIDE SEQUENCE [GENOMIC DNA]</scope>
    <source>
        <strain>ATCC 30010 / Neff</strain>
    </source>
</reference>
<feature type="chain" id="PRO_0000118587" description="NADH-ubiquinone oxidoreductase 49 kDa subunit">
    <location>
        <begin position="1"/>
        <end position="401"/>
    </location>
</feature>
<gene>
    <name type="primary">NAD7</name>
</gene>
<protein>
    <recommendedName>
        <fullName>NADH-ubiquinone oxidoreductase 49 kDa subunit</fullName>
        <ecNumber>7.1.1.2</ecNumber>
    </recommendedName>
    <alternativeName>
        <fullName>NADH dehydrogenase subunit 7</fullName>
    </alternativeName>
</protein>